<organism>
    <name type="scientific">Mus musculus</name>
    <name type="common">Mouse</name>
    <dbReference type="NCBI Taxonomy" id="10090"/>
    <lineage>
        <taxon>Eukaryota</taxon>
        <taxon>Metazoa</taxon>
        <taxon>Chordata</taxon>
        <taxon>Craniata</taxon>
        <taxon>Vertebrata</taxon>
        <taxon>Euteleostomi</taxon>
        <taxon>Mammalia</taxon>
        <taxon>Eutheria</taxon>
        <taxon>Euarchontoglires</taxon>
        <taxon>Glires</taxon>
        <taxon>Rodentia</taxon>
        <taxon>Myomorpha</taxon>
        <taxon>Muroidea</taxon>
        <taxon>Muridae</taxon>
        <taxon>Murinae</taxon>
        <taxon>Mus</taxon>
        <taxon>Mus</taxon>
    </lineage>
</organism>
<comment type="function">
    <text evidence="1 2 3 6 7 8 9">Peptide hormone that functions as endogenous ligand for the G-protein-coupled apelin receptor (APLNR/APJ), that plays a role in the regulation of normal cardiovascular function and fluid homeostasis. Functions as a balanced agonist activating both G(i) protein pathway and beta-arrestin pathway of APLNR. Downstream G proteins activation, apelin can inhibit cAMP production and activate key intracellular effectors such as ERKs. On the other hand, APLNR activation induces beta-arrestin recruitment to the membrane leading to desensitization and internalization of the receptor (By similarity). Required for mesendodermal differentiation, blood vessels formation and heart morphogenesis during early development and for adult cardiovascular homeostasis (PubMed:28371822, PubMed:28663440, PubMed:28854362, PubMed:28890073). Acts as a motogen by promoting mesendodermal cell migration during gastrulation by binding and activating APLNR (By similarity). Acts as an early embryonic regulator of cellular movement with a role in migration and development of cardiac progenitor cells (PubMed:28854362). May act as a chemoattractant for the activation of angioblast migration toward the embryonic midline, i.e. the position of the future vessel formation, during vasculogenesis (By similarity). Positively regulates sinus venosus (SV)-derived endothelial cells migration into the developing heart to promote coronary blood vessel sprouting (PubMed:28890073). Plays a role in placental vascular development; promotes placental trophoblast invasion and spiral artery remodeling in the uterus (PubMed:28663440). Involved in the regulation of maternal cardiovascular homeostasis to prevent gestational hypertension and for potent cardioprotective functions during heart failure (PubMed:28371822, PubMed:28663440). Mediates myocardial contractility in an ERK1/2-dependent manner (By similarity).</text>
</comment>
<comment type="subunit">
    <text evidence="2">Interacts with APLNR.</text>
</comment>
<comment type="subcellular location">
    <subcellularLocation>
        <location evidence="7">Secreted</location>
    </subcellularLocation>
    <subcellularLocation>
        <location evidence="7">Secreted</location>
        <location evidence="7">Extracellular space</location>
    </subcellularLocation>
    <text evidence="2 7">Found in blood plasma (By similarity). Found in serum of pregnant mice, peaking at midgestation; indicating a maternal and zygotic origin of circulating APELA during pregnancy (PubMed:28663440).</text>
</comment>
<comment type="tissue specificity">
    <text evidence="4 5 7 8 9">Expressed in the placenta (PubMed:28663440). Expressed in syncytiotrophoblasts of the placenta labyrinth at 10.5 dpc (PubMed:28663440). Expressed in placental chorionic trophoblasts (at protein level) (PubMed:28663440). Expressed in a small population of epiblast cells in the distal half of the embryo at 7 dpc (PubMed:20153842, PubMed:28854362). Expressed in newly formed definitive endoderm cells in the proximal half of the embryo, while it is not present in extra-embryonic endoderm at 7.5 dpc (PubMed:20153842, PubMed:28854362). This expression pattern then changes to the ventral aspect of the developing foregut pocket and the entire hindgut pocket at 8.5 dpc, before becoming restricted to the foregut overlying the heart and the posterior-most hindgut (PubMed:20153842). Not detected in endothelial precursor cells of the yolk sac at 8 dpc (PubMed:28663440). Expressed in extraembryonic tissues as well as in the chorion at 8.25 dpc (PubMed:28854362). Expressed in endometrial stroma of the uterus of pregnant mice at 8.5 dpc (PubMed:28663440). Expressed in the developing heart, caudal neural tube and trophobasts at 9 dpc (PubMed:28663440). Expressed in the chorionic plate of the chorioallantoic placenta at 9 dpc (PubMed:28663440). Expressed in the posterior half of the ventral neural tube at 9.25 dpc (PubMed:20153842). Expressed in trophoblast cells at the periphery of the placenta at 9.5 dpc (PubMed:28854362). Expressed in collecting ducts of the kidney of pregnant mice at 10.5 dpc (PubMed:28663440). Expressed in the epicardium of the developing heart at 11.5 dpc (PubMed:26611206, PubMed:28890073). Expressed weakly in the adult heart (PubMed:26611206). Expressed in endothelial cells and fibroblasts and weakly in cardiomyocytes (PubMed:26611206).</text>
</comment>
<comment type="developmental stage">
    <text evidence="4 7">Expressed during early embryonic development from the two cell to blastocyst stages (PubMed:28663440). Expressed in populations of the definitive endoderm from 7 to 8.5 dpc (PubMed:20153842).</text>
</comment>
<comment type="induction">
    <text evidence="5">Up-regulated following myocardial infarction (MI) (at protein level) (PubMed:26611206).</text>
</comment>
<comment type="disruption phenotype">
    <text evidence="7 8 9">Mice lacking APELA are not represented at the expected Mendelian ratios (PubMed:28663440, PubMed:28854362). Mutant embryos exhibit around 10% to 50% incidence of incomplete penetrance of embryonic lethality (PubMed:28663440, PubMed:28854362). Fetal death is increased especially in mothers devoid of all Apela expression (PubMed:28663440). Mutant embryos show extraembryonic tissues anomalies, such as ectopic anterior chorion, mesoderm yolk sac and blood island protrusions and reduced allantois thickness at 8.25 dpc (PubMed:28854362). Mutant embryos show improper establishment of the fetal-maternal circulation, such as underdeveloped yolk sac vasculature, embryonic vascular malformations and impaired cardiac tube looping at 9.5 and 10.5 dpc (PubMed:28663440, PubMed:28854362). Show also defect in somitic vasculature at 10.5 dpc. The heart of mutant embryos show reduced coronary vessel growth at 13.5 dpc and 15.5 dpc (PubMed:28890073). The placenta of mutant pregnant mice show decreased labyrinth thickness, poor vasculature and decreased cell proliferation (PubMed:28663440). Mutant pregnant mice that survived to adulthood developed preeclampsia, including increased systolic blood pressure, proteinuria, and glomerular endotheliosis (PubMed:28663440). Mutant embryos show altered expression of several erythroid and myeloid progenitor genes at 7.5 dpc (PubMed:28854362). Mutant embryos show increased expression of hypoxia-related genes in the placenta at 10.5 (PubMed:28663440). Double knockout mice of APELA and APLN genes exhibit the same penetrance, embryonic lethality and cardiovascular malformations as single APELA knockout mice (PubMed:28854362).</text>
</comment>
<comment type="similarity">
    <text evidence="10">Belongs to the Elabela/Toddler family.</text>
</comment>
<comment type="sequence caution" evidence="10">
    <conflict type="frameshift">
        <sequence resource="EMBL" id="AK014119"/>
    </conflict>
</comment>
<keyword id="KW-0037">Angiogenesis</keyword>
<keyword id="KW-0217">Developmental protein</keyword>
<keyword id="KW-0221">Differentiation</keyword>
<keyword id="KW-0306">Gastrulation</keyword>
<keyword id="KW-0372">Hormone</keyword>
<keyword id="KW-1185">Reference proteome</keyword>
<keyword id="KW-0964">Secreted</keyword>
<keyword id="KW-0732">Signal</keyword>
<accession>P0DMC4</accession>
<evidence type="ECO:0000250" key="1">
    <source>
        <dbReference type="UniProtKB" id="P0DMC2"/>
    </source>
</evidence>
<evidence type="ECO:0000250" key="2">
    <source>
        <dbReference type="UniProtKB" id="P0DMC3"/>
    </source>
</evidence>
<evidence type="ECO:0000250" key="3">
    <source>
        <dbReference type="UniProtKB" id="P0DP76"/>
    </source>
</evidence>
<evidence type="ECO:0000269" key="4">
    <source>
    </source>
</evidence>
<evidence type="ECO:0000269" key="5">
    <source>
    </source>
</evidence>
<evidence type="ECO:0000269" key="6">
    <source>
    </source>
</evidence>
<evidence type="ECO:0000269" key="7">
    <source>
    </source>
</evidence>
<evidence type="ECO:0000269" key="8">
    <source>
    </source>
</evidence>
<evidence type="ECO:0000269" key="9">
    <source>
    </source>
</evidence>
<evidence type="ECO:0000305" key="10"/>
<evidence type="ECO:0000312" key="11">
    <source>
        <dbReference type="MGI" id="MGI:3642370"/>
    </source>
</evidence>
<dbReference type="EMBL" id="AK014119">
    <property type="status" value="NOT_ANNOTATED_CDS"/>
    <property type="molecule type" value="mRNA"/>
</dbReference>
<dbReference type="EMBL" id="AI930099">
    <property type="status" value="NOT_ANNOTATED_CDS"/>
    <property type="molecule type" value="mRNA"/>
</dbReference>
<dbReference type="EMBL" id="GL456145">
    <property type="status" value="NOT_ANNOTATED_CDS"/>
    <property type="molecule type" value="Genomic_DNA"/>
</dbReference>
<dbReference type="CCDS" id="CCDS80883.1"/>
<dbReference type="RefSeq" id="NP_001284483.1">
    <property type="nucleotide sequence ID" value="NM_001297554.2"/>
</dbReference>
<dbReference type="RefSeq" id="NP_001386351.1">
    <property type="nucleotide sequence ID" value="NM_001399422.1"/>
</dbReference>
<dbReference type="RefSeq" id="XP_011240549.1">
    <property type="nucleotide sequence ID" value="XM_011242247.2"/>
</dbReference>
<dbReference type="SMR" id="P0DMC4"/>
<dbReference type="FunCoup" id="P0DMC4">
    <property type="interactions" value="960"/>
</dbReference>
<dbReference type="STRING" id="10090.ENSMUSP00000140510"/>
<dbReference type="PaxDb" id="10090-ENSMUSP00000140510"/>
<dbReference type="Ensembl" id="ENSMUST00000124790.8">
    <property type="protein sequence ID" value="ENSMUSP00000139425.2"/>
    <property type="gene ID" value="ENSMUSG00000079042.11"/>
</dbReference>
<dbReference type="Ensembl" id="ENSMUST00000142822.4">
    <property type="protein sequence ID" value="ENSMUSP00000140510.2"/>
    <property type="gene ID" value="ENSMUSG00000079042.11"/>
</dbReference>
<dbReference type="GeneID" id="100038489"/>
<dbReference type="KEGG" id="mmu:100038489"/>
<dbReference type="UCSC" id="uc009lvh.3">
    <property type="organism name" value="mouse"/>
</dbReference>
<dbReference type="AGR" id="MGI:3642370"/>
<dbReference type="CTD" id="100506013"/>
<dbReference type="MGI" id="MGI:3642370">
    <property type="gene designation" value="Apela"/>
</dbReference>
<dbReference type="VEuPathDB" id="HostDB:ENSMUSG00000079042"/>
<dbReference type="eggNOG" id="ENOG502TDEQ">
    <property type="taxonomic scope" value="Eukaryota"/>
</dbReference>
<dbReference type="GeneTree" id="ENSGT01120000272498"/>
<dbReference type="HOGENOM" id="CLU_3049692_0_0_1"/>
<dbReference type="InParanoid" id="P0DMC4"/>
<dbReference type="OMA" id="GCSHRRC"/>
<dbReference type="OrthoDB" id="9922869at2759"/>
<dbReference type="BioGRID-ORCS" id="100038489">
    <property type="hits" value="0 hits in 32 CRISPR screens"/>
</dbReference>
<dbReference type="PRO" id="PR:P0DMC4"/>
<dbReference type="Proteomes" id="UP000000589">
    <property type="component" value="Chromosome 8"/>
</dbReference>
<dbReference type="RNAct" id="P0DMC4">
    <property type="molecule type" value="protein"/>
</dbReference>
<dbReference type="Bgee" id="ENSMUSG00000079042">
    <property type="expression patterns" value="Expressed in renal medulla collecting duct and 65 other cell types or tissues"/>
</dbReference>
<dbReference type="GO" id="GO:0005576">
    <property type="term" value="C:extracellular region"/>
    <property type="evidence" value="ECO:0000250"/>
    <property type="project" value="UniProtKB"/>
</dbReference>
<dbReference type="GO" id="GO:0005615">
    <property type="term" value="C:extracellular space"/>
    <property type="evidence" value="ECO:0000314"/>
    <property type="project" value="UniProtKB"/>
</dbReference>
<dbReference type="GO" id="GO:0031704">
    <property type="term" value="F:apelin receptor binding"/>
    <property type="evidence" value="ECO:0000250"/>
    <property type="project" value="UniProtKB"/>
</dbReference>
<dbReference type="GO" id="GO:0005179">
    <property type="term" value="F:hormone activity"/>
    <property type="evidence" value="ECO:0000250"/>
    <property type="project" value="UniProtKB"/>
</dbReference>
<dbReference type="GO" id="GO:0001525">
    <property type="term" value="P:angiogenesis"/>
    <property type="evidence" value="ECO:0007669"/>
    <property type="project" value="UniProtKB-KW"/>
</dbReference>
<dbReference type="GO" id="GO:0060183">
    <property type="term" value="P:apelin receptor signaling pathway"/>
    <property type="evidence" value="ECO:0000250"/>
    <property type="project" value="UniProtKB"/>
</dbReference>
<dbReference type="GO" id="GO:0090134">
    <property type="term" value="P:cell migration involved in mesendoderm migration"/>
    <property type="evidence" value="ECO:0000250"/>
    <property type="project" value="UniProtKB"/>
</dbReference>
<dbReference type="GO" id="GO:0060976">
    <property type="term" value="P:coronary vasculature development"/>
    <property type="evidence" value="ECO:0000315"/>
    <property type="project" value="UniProtKB"/>
</dbReference>
<dbReference type="GO" id="GO:0035050">
    <property type="term" value="P:embryonic heart tube development"/>
    <property type="evidence" value="ECO:0000315"/>
    <property type="project" value="UniProtKB"/>
</dbReference>
<dbReference type="GO" id="GO:0007492">
    <property type="term" value="P:endoderm development"/>
    <property type="evidence" value="ECO:0000250"/>
    <property type="project" value="UniProtKB"/>
</dbReference>
<dbReference type="GO" id="GO:0007186">
    <property type="term" value="P:G protein-coupled receptor signaling pathway"/>
    <property type="evidence" value="ECO:0000250"/>
    <property type="project" value="UniProtKB"/>
</dbReference>
<dbReference type="GO" id="GO:0007507">
    <property type="term" value="P:heart development"/>
    <property type="evidence" value="ECO:0000250"/>
    <property type="project" value="UniProtKB"/>
</dbReference>
<dbReference type="GO" id="GO:0090133">
    <property type="term" value="P:mesendoderm migration"/>
    <property type="evidence" value="ECO:0000250"/>
    <property type="project" value="UniProtKB"/>
</dbReference>
<dbReference type="GO" id="GO:0007509">
    <property type="term" value="P:mesoderm migration involved in gastrulation"/>
    <property type="evidence" value="ECO:0000250"/>
    <property type="project" value="UniProtKB"/>
</dbReference>
<dbReference type="GO" id="GO:0060674">
    <property type="term" value="P:placenta blood vessel development"/>
    <property type="evidence" value="ECO:0000315"/>
    <property type="project" value="UniProtKB"/>
</dbReference>
<dbReference type="GO" id="GO:0045766">
    <property type="term" value="P:positive regulation of angiogenesis"/>
    <property type="evidence" value="ECO:0000250"/>
    <property type="project" value="UniProtKB"/>
</dbReference>
<dbReference type="GO" id="GO:1903589">
    <property type="term" value="P:positive regulation of blood vessel endothelial cell proliferation involved in sprouting angiogenesis"/>
    <property type="evidence" value="ECO:0000315"/>
    <property type="project" value="UniProtKB"/>
</dbReference>
<dbReference type="GO" id="GO:0070374">
    <property type="term" value="P:positive regulation of ERK1 and ERK2 cascade"/>
    <property type="evidence" value="ECO:0000250"/>
    <property type="project" value="UniProtKB"/>
</dbReference>
<dbReference type="GO" id="GO:0045823">
    <property type="term" value="P:positive regulation of heart contraction"/>
    <property type="evidence" value="ECO:0000250"/>
    <property type="project" value="UniProtKB"/>
</dbReference>
<dbReference type="GO" id="GO:1901165">
    <property type="term" value="P:positive regulation of trophoblast cell migration"/>
    <property type="evidence" value="ECO:0000250"/>
    <property type="project" value="UniProtKB"/>
</dbReference>
<dbReference type="GO" id="GO:0008217">
    <property type="term" value="P:regulation of blood pressure"/>
    <property type="evidence" value="ECO:0000315"/>
    <property type="project" value="MGI"/>
</dbReference>
<dbReference type="GO" id="GO:0001570">
    <property type="term" value="P:vasculogenesis"/>
    <property type="evidence" value="ECO:0000315"/>
    <property type="project" value="UniProtKB"/>
</dbReference>
<dbReference type="CDD" id="cd20244">
    <property type="entry name" value="Toddler"/>
    <property type="match status" value="1"/>
</dbReference>
<dbReference type="InterPro" id="IPR047853">
    <property type="entry name" value="ELA"/>
</dbReference>
<dbReference type="Pfam" id="PF22050">
    <property type="entry name" value="Toddler"/>
    <property type="match status" value="1"/>
</dbReference>
<gene>
    <name evidence="11" type="primary">Apela</name>
    <name type="synonym">Ela</name>
    <name type="synonym">Ende</name>
    <name type="synonym">Gm10664</name>
    <name type="synonym">Tdl</name>
</gene>
<feature type="signal peptide" evidence="2">
    <location>
        <begin position="1"/>
        <end position="23"/>
    </location>
</feature>
<feature type="chain" id="PRO_0000425558" description="Apelin receptor early endogenous ligand">
    <location>
        <begin position="24"/>
        <end position="54"/>
    </location>
</feature>
<feature type="sequence conflict" description="In Ref. 2; AI930099." evidence="10" ref="2">
    <original>Q</original>
    <variation>H</variation>
    <location>
        <position position="23"/>
    </location>
</feature>
<feature type="sequence conflict" description="In Ref. 2; AI930099." evidence="10" ref="2">
    <original>V</original>
    <variation>D</variation>
    <location>
        <position position="26"/>
    </location>
</feature>
<sequence length="54" mass="6828">MRFQPLFWVFFIFAMSLLFISEQKPVNFPRRRKLYRHNCFRRRCIPLHSRVPFP</sequence>
<protein>
    <recommendedName>
        <fullName evidence="11">Apelin receptor early endogenous ligand</fullName>
    </recommendedName>
    <alternativeName>
        <fullName evidence="1">Protein Elabela</fullName>
        <shortName evidence="1">ELA</shortName>
    </alternativeName>
    <alternativeName>
        <fullName evidence="1">Protein Toddler</fullName>
    </alternativeName>
</protein>
<proteinExistence type="evidence at protein level"/>
<name>ELA_MOUSE</name>
<reference key="1">
    <citation type="journal article" date="2005" name="Science">
        <title>The transcriptional landscape of the mammalian genome.</title>
        <authorList>
            <person name="Carninci P."/>
            <person name="Kasukawa T."/>
            <person name="Katayama S."/>
            <person name="Gough J."/>
            <person name="Frith M.C."/>
            <person name="Maeda N."/>
            <person name="Oyama R."/>
            <person name="Ravasi T."/>
            <person name="Lenhard B."/>
            <person name="Wells C."/>
            <person name="Kodzius R."/>
            <person name="Shimokawa K."/>
            <person name="Bajic V.B."/>
            <person name="Brenner S.E."/>
            <person name="Batalov S."/>
            <person name="Forrest A.R."/>
            <person name="Zavolan M."/>
            <person name="Davis M.J."/>
            <person name="Wilming L.G."/>
            <person name="Aidinis V."/>
            <person name="Allen J.E."/>
            <person name="Ambesi-Impiombato A."/>
            <person name="Apweiler R."/>
            <person name="Aturaliya R.N."/>
            <person name="Bailey T.L."/>
            <person name="Bansal M."/>
            <person name="Baxter L."/>
            <person name="Beisel K.W."/>
            <person name="Bersano T."/>
            <person name="Bono H."/>
            <person name="Chalk A.M."/>
            <person name="Chiu K.P."/>
            <person name="Choudhary V."/>
            <person name="Christoffels A."/>
            <person name="Clutterbuck D.R."/>
            <person name="Crowe M.L."/>
            <person name="Dalla E."/>
            <person name="Dalrymple B.P."/>
            <person name="de Bono B."/>
            <person name="Della Gatta G."/>
            <person name="di Bernardo D."/>
            <person name="Down T."/>
            <person name="Engstrom P."/>
            <person name="Fagiolini M."/>
            <person name="Faulkner G."/>
            <person name="Fletcher C.F."/>
            <person name="Fukushima T."/>
            <person name="Furuno M."/>
            <person name="Futaki S."/>
            <person name="Gariboldi M."/>
            <person name="Georgii-Hemming P."/>
            <person name="Gingeras T.R."/>
            <person name="Gojobori T."/>
            <person name="Green R.E."/>
            <person name="Gustincich S."/>
            <person name="Harbers M."/>
            <person name="Hayashi Y."/>
            <person name="Hensch T.K."/>
            <person name="Hirokawa N."/>
            <person name="Hill D."/>
            <person name="Huminiecki L."/>
            <person name="Iacono M."/>
            <person name="Ikeo K."/>
            <person name="Iwama A."/>
            <person name="Ishikawa T."/>
            <person name="Jakt M."/>
            <person name="Kanapin A."/>
            <person name="Katoh M."/>
            <person name="Kawasawa Y."/>
            <person name="Kelso J."/>
            <person name="Kitamura H."/>
            <person name="Kitano H."/>
            <person name="Kollias G."/>
            <person name="Krishnan S.P."/>
            <person name="Kruger A."/>
            <person name="Kummerfeld S.K."/>
            <person name="Kurochkin I.V."/>
            <person name="Lareau L.F."/>
            <person name="Lazarevic D."/>
            <person name="Lipovich L."/>
            <person name="Liu J."/>
            <person name="Liuni S."/>
            <person name="McWilliam S."/>
            <person name="Madan Babu M."/>
            <person name="Madera M."/>
            <person name="Marchionni L."/>
            <person name="Matsuda H."/>
            <person name="Matsuzawa S."/>
            <person name="Miki H."/>
            <person name="Mignone F."/>
            <person name="Miyake S."/>
            <person name="Morris K."/>
            <person name="Mottagui-Tabar S."/>
            <person name="Mulder N."/>
            <person name="Nakano N."/>
            <person name="Nakauchi H."/>
            <person name="Ng P."/>
            <person name="Nilsson R."/>
            <person name="Nishiguchi S."/>
            <person name="Nishikawa S."/>
            <person name="Nori F."/>
            <person name="Ohara O."/>
            <person name="Okazaki Y."/>
            <person name="Orlando V."/>
            <person name="Pang K.C."/>
            <person name="Pavan W.J."/>
            <person name="Pavesi G."/>
            <person name="Pesole G."/>
            <person name="Petrovsky N."/>
            <person name="Piazza S."/>
            <person name="Reed J."/>
            <person name="Reid J.F."/>
            <person name="Ring B.Z."/>
            <person name="Ringwald M."/>
            <person name="Rost B."/>
            <person name="Ruan Y."/>
            <person name="Salzberg S.L."/>
            <person name="Sandelin A."/>
            <person name="Schneider C."/>
            <person name="Schoenbach C."/>
            <person name="Sekiguchi K."/>
            <person name="Semple C.A."/>
            <person name="Seno S."/>
            <person name="Sessa L."/>
            <person name="Sheng Y."/>
            <person name="Shibata Y."/>
            <person name="Shimada H."/>
            <person name="Shimada K."/>
            <person name="Silva D."/>
            <person name="Sinclair B."/>
            <person name="Sperling S."/>
            <person name="Stupka E."/>
            <person name="Sugiura K."/>
            <person name="Sultana R."/>
            <person name="Takenaka Y."/>
            <person name="Taki K."/>
            <person name="Tammoja K."/>
            <person name="Tan S.L."/>
            <person name="Tang S."/>
            <person name="Taylor M.S."/>
            <person name="Tegner J."/>
            <person name="Teichmann S.A."/>
            <person name="Ueda H.R."/>
            <person name="van Nimwegen E."/>
            <person name="Verardo R."/>
            <person name="Wei C.L."/>
            <person name="Yagi K."/>
            <person name="Yamanishi H."/>
            <person name="Zabarovsky E."/>
            <person name="Zhu S."/>
            <person name="Zimmer A."/>
            <person name="Hide W."/>
            <person name="Bult C."/>
            <person name="Grimmond S.M."/>
            <person name="Teasdale R.D."/>
            <person name="Liu E.T."/>
            <person name="Brusic V."/>
            <person name="Quackenbush J."/>
            <person name="Wahlestedt C."/>
            <person name="Mattick J.S."/>
            <person name="Hume D.A."/>
            <person name="Kai C."/>
            <person name="Sasaki D."/>
            <person name="Tomaru Y."/>
            <person name="Fukuda S."/>
            <person name="Kanamori-Katayama M."/>
            <person name="Suzuki M."/>
            <person name="Aoki J."/>
            <person name="Arakawa T."/>
            <person name="Iida J."/>
            <person name="Imamura K."/>
            <person name="Itoh M."/>
            <person name="Kato T."/>
            <person name="Kawaji H."/>
            <person name="Kawagashira N."/>
            <person name="Kawashima T."/>
            <person name="Kojima M."/>
            <person name="Kondo S."/>
            <person name="Konno H."/>
            <person name="Nakano K."/>
            <person name="Ninomiya N."/>
            <person name="Nishio T."/>
            <person name="Okada M."/>
            <person name="Plessy C."/>
            <person name="Shibata K."/>
            <person name="Shiraki T."/>
            <person name="Suzuki S."/>
            <person name="Tagami M."/>
            <person name="Waki K."/>
            <person name="Watahiki A."/>
            <person name="Okamura-Oho Y."/>
            <person name="Suzuki H."/>
            <person name="Kawai J."/>
            <person name="Hayashizaki Y."/>
        </authorList>
    </citation>
    <scope>NUCLEOTIDE SEQUENCE [LARGE SCALE MRNA]</scope>
    <source>
        <strain>C57BL/6J</strain>
        <tissue>Embryo</tissue>
    </source>
</reference>
<reference key="2">
    <citation type="submission" date="1999-03" db="EMBL/GenBank/DDBJ databases">
        <title>The WashU-NCI mouse EST project 1999.</title>
        <authorList>
            <person name="Marra M."/>
            <person name="Hillier L."/>
            <person name="Kucaba T."/>
            <person name="Martin J."/>
            <person name="Beck C."/>
            <person name="Wylie T."/>
            <person name="Underwood K."/>
            <person name="Steptoe M."/>
            <person name="Theising B."/>
            <person name="Allen M."/>
            <person name="Bowers Y."/>
            <person name="Person B."/>
            <person name="Swaller T."/>
            <person name="Gibbons M."/>
            <person name="Pape D."/>
            <person name="Harvey N."/>
            <person name="Schurk R."/>
            <person name="Ritter E."/>
            <person name="Kohn S."/>
            <person name="Shin T."/>
            <person name="Jackson Y."/>
            <person name="Cardenas M."/>
            <person name="McCann R."/>
            <person name="Waterston R."/>
            <person name="Wilson R."/>
        </authorList>
    </citation>
    <scope>NUCLEOTIDE SEQUENCE [MRNA]</scope>
</reference>
<reference key="3">
    <citation type="journal article" date="2009" name="PLoS Biol.">
        <title>Lineage-specific biology revealed by a finished genome assembly of the mouse.</title>
        <authorList>
            <person name="Church D.M."/>
            <person name="Goodstadt L."/>
            <person name="Hillier L.W."/>
            <person name="Zody M.C."/>
            <person name="Goldstein S."/>
            <person name="She X."/>
            <person name="Bult C.J."/>
            <person name="Agarwala R."/>
            <person name="Cherry J.L."/>
            <person name="DiCuccio M."/>
            <person name="Hlavina W."/>
            <person name="Kapustin Y."/>
            <person name="Meric P."/>
            <person name="Maglott D."/>
            <person name="Birtle Z."/>
            <person name="Marques A.C."/>
            <person name="Graves T."/>
            <person name="Zhou S."/>
            <person name="Teague B."/>
            <person name="Potamousis K."/>
            <person name="Churas C."/>
            <person name="Place M."/>
            <person name="Herschleb J."/>
            <person name="Runnheim R."/>
            <person name="Forrest D."/>
            <person name="Amos-Landgraf J."/>
            <person name="Schwartz D.C."/>
            <person name="Cheng Z."/>
            <person name="Lindblad-Toh K."/>
            <person name="Eichler E.E."/>
            <person name="Ponting C.P."/>
        </authorList>
    </citation>
    <scope>NUCLEOTIDE SEQUENCE [LARGE SCALE GENOMIC DNA]</scope>
    <source>
        <strain>C57BL/6J</strain>
    </source>
</reference>
<reference key="4">
    <citation type="journal article" date="2010" name="Gene Expr. Patterns">
        <title>Expression of two novel transcripts in the mouse definitive endoderm.</title>
        <authorList>
            <person name="Hassan A.S."/>
            <person name="Hou J."/>
            <person name="Wei W."/>
            <person name="Hoodless P.A."/>
        </authorList>
    </citation>
    <scope>TISSUE SPECIFICITY</scope>
    <scope>DEVELOPMENTAL STAGE</scope>
</reference>
<reference key="5">
    <citation type="journal article" date="2016" name="Basic Res. Cardiol.">
        <title>Characterization of apela, a novel endogenous ligand of apelin receptor, in the adult heart.</title>
        <authorList>
            <person name="Perjes A."/>
            <person name="Kilpioe T."/>
            <person name="Ulvila J."/>
            <person name="Magga J."/>
            <person name="Alakoski T."/>
            <person name="Szabo Z."/>
            <person name="Vainio L."/>
            <person name="Halmetoja E."/>
            <person name="Vuolteenaho O."/>
            <person name="Petaejae-Repo U."/>
            <person name="Szokodi I."/>
            <person name="Kerkelae R."/>
        </authorList>
    </citation>
    <scope>TISSUE SPECIFICITY</scope>
    <scope>INDUCTION</scope>
</reference>
<reference key="6">
    <citation type="journal article" date="2017" name="Cardiovasc. Res.">
        <title>ELABELA-APJ axis protects from pressure overload heart failure and angiotensin II-induced cardiac damage.</title>
        <authorList>
            <person name="Sato T."/>
            <person name="Sato C."/>
            <person name="Kadowaki A."/>
            <person name="Watanabe H."/>
            <person name="Ho L."/>
            <person name="Ishida J."/>
            <person name="Yamaguchi T."/>
            <person name="Kimura A."/>
            <person name="Fukamizu A."/>
            <person name="Penninger J.M."/>
            <person name="Reversade B."/>
            <person name="Ito H."/>
            <person name="Imai Y."/>
            <person name="Kuba K."/>
        </authorList>
    </citation>
    <scope>FUNCTION</scope>
</reference>
<reference key="7">
    <citation type="journal article" date="2017" name="Cell Rep.">
        <title>Loss of Apela peptide in mice causes low penetrance embryonic lethality and defects in early mesodermal derivatives.</title>
        <authorList>
            <person name="Freyer L."/>
            <person name="Hsu C.W."/>
            <person name="Nowotschin S."/>
            <person name="Pauli A."/>
            <person name="Ishida J."/>
            <person name="Kuba K."/>
            <person name="Fukamizu A."/>
            <person name="Schier A.F."/>
            <person name="Hoodless P.A."/>
            <person name="Dickinson M.E."/>
            <person name="Hadjantonakis A.K."/>
        </authorList>
    </citation>
    <scope>FUNCTION</scope>
    <scope>TISSUE SPECIFICITY</scope>
    <scope>DISRUPTION PHENOTYPE</scope>
</reference>
<reference key="8">
    <citation type="journal article" date="2017" name="Dev. Cell">
        <title>Alternative progenitor cells compensate to rebuild the coronary vasculature in Elabela- and Apj-deficient hearts.</title>
        <authorList>
            <person name="Sharma B."/>
            <person name="Ho L."/>
            <person name="Ford G.H."/>
            <person name="Chen H.I."/>
            <person name="Goldstone A.B."/>
            <person name="Woo Y.J."/>
            <person name="Quertermous T."/>
            <person name="Reversade B."/>
            <person name="Red-Horse K."/>
        </authorList>
    </citation>
    <scope>FUNCTION</scope>
    <scope>DISRUPTION PHENOTYPE</scope>
    <scope>TISSUE SPECIFICITY</scope>
</reference>
<reference key="9">
    <citation type="journal article" date="2017" name="Science">
        <title>ELABELA deficiency promotes preeclampsia and cardiovascular malformations in mice.</title>
        <authorList>
            <person name="Ho L."/>
            <person name="van Dijk M."/>
            <person name="Chye S.T.J."/>
            <person name="Messerschmidt D.M."/>
            <person name="Chng S.C."/>
            <person name="Ong S."/>
            <person name="Yi L.K."/>
            <person name="Boussata S."/>
            <person name="Goh G.H."/>
            <person name="Afink G.B."/>
            <person name="Lim C.Y."/>
            <person name="Dunn N.R."/>
            <person name="Solter D."/>
            <person name="Knowles B.B."/>
            <person name="Reversade B."/>
        </authorList>
    </citation>
    <scope>FUNCTION</scope>
    <scope>SUBCELLULAR LOCATION</scope>
    <scope>TISSUE SPECIFICITY</scope>
    <scope>DEVELOPMENTAL STAGE</scope>
    <scope>DISRUPTION PHENOTYPE</scope>
</reference>